<sequence>MKALAVLGPGLLVHLLTLVQKSGGECKEALVKSAMNVDMKYQLPNFTAETPIQNVVVHQHYIYLGAVNYIYVLNDTDLQKVAEYRTGPVLEHPECLPCQDCSHKANASGGVWADNVNMALLVDTYYDDQLISCGSVRRGTCRRHVLRSDAADIRSEVHCMFSPQADEEPGRCPDCVVSALGTKVLLSEKDRFINFFVGNTISSAHLPGRALHSISVRRLKETQDGFKFLTDQSYIDVLPEFRDSYPIKYVHAFESNHFIYFLTVQRETLDAQTFHTRIVRFCSVDSGLHSYVEMPLECILTEKRRRRSARSEVFNILQAAYVGKPGTHLANQIGVNLDDDILYAVFAQSKPDSAEPMNRSAVCAFPIKLVNEFFNKIVNKNNVRCLQHFYGPNHEPCFNRTLLRIPSGCEVRSDEYRTEFTTALQRVDLFMGQFNRVLLTSVSTFIAGDLTIANLGTSEGRFMQVVVFRSGSSTPHVNFRLDSHPVSPEMIVQHPLNQNGYTLVVTGKTITKIPLNGLGCEHFQSCSQCLSAPPFVQCGWCHNKCVRSEECPSGVWTQDVCHPTIYEVFPTTAPLEGGTTLTICGWDFGFRRNNKFDLKKTRILLGNESCTLTLSESTANTLKCTVGPAMSEHLNLSIIISSGRGTAQYTAFSYVDPIITSVSPSYGPKTGGTLLTLTGKYLNSGNSRHISIGGKTCSLKSVSESVLECYTPAQTTTTEFPIKLKIDLANRETNSFNYREDPIVDEIHPTKSFISGGSTITGVGKNLNSVSGLRMVISVREAGRNFTVACQHRSNSEIICCTTPSLQQLNLQLPLTTKAFFMLDGIHSKYFDLIYVHDPVFKLFEKPVMISIGNENVLEIKGNDIDPEAVKGEVLKVGNKSCENVHSHSEAVLCTVPSDLLKLNSELNIEWKQAVSSTILGKVIVQPDQNFTGLIVGVISISVLLSLLFGLFLWLKRRKQIKDLGSELVRYDARIHTPHLDRLVSARSISPTTEMVSNESVDYRATFPEDQFANSSQNGSCRQVQCPLMDLSPILPGGDSDISSPLLQNTVRIDLSALNPELVQAVQHVVIGPSRLIVHFNEVIGRGHFGCVYHGTLLDNDDKKIHCAVKSLNRITDIGEVSQFLTEGIIMKDFSHPNVLSLLGICLRSEGSPLVVLPYMKHGDLRNFIRNETHNPTVKDLIGFGLQVAKGMKYLASKKFVHRDLAARNCMLDENFTVKVADFGLARDVYDKEYYSVHNKTGAKLPVKWMALESLQTQKFTTKSDVWSFGVLLWELMTRGAPPYPDVNTFDITVYLLQGRRLLQPEYCPDHLYEVMLKCWHPKAEQRPSFAELVSRISAIFSAFIGEHYVHVNATYVNVKCVAPYPCLLSSQDHVDGEGDT</sequence>
<dbReference type="EC" id="2.7.10.1"/>
<dbReference type="EMBL" id="DP000028">
    <property type="protein sequence ID" value="ABC87472.1"/>
    <property type="molecule type" value="Genomic_DNA"/>
</dbReference>
<dbReference type="SMR" id="Q2IBC0"/>
<dbReference type="FunCoup" id="Q2IBC0">
    <property type="interactions" value="524"/>
</dbReference>
<dbReference type="GlyCosmos" id="Q2IBC0">
    <property type="glycosylation" value="10 sites, No reported glycans"/>
</dbReference>
<dbReference type="InParanoid" id="Q2IBC0"/>
<dbReference type="Proteomes" id="UP000472240">
    <property type="component" value="Unplaced"/>
</dbReference>
<dbReference type="GO" id="GO:0005886">
    <property type="term" value="C:plasma membrane"/>
    <property type="evidence" value="ECO:0007669"/>
    <property type="project" value="TreeGrafter"/>
</dbReference>
<dbReference type="GO" id="GO:0002116">
    <property type="term" value="C:semaphorin receptor complex"/>
    <property type="evidence" value="ECO:0007669"/>
    <property type="project" value="TreeGrafter"/>
</dbReference>
<dbReference type="GO" id="GO:0005524">
    <property type="term" value="F:ATP binding"/>
    <property type="evidence" value="ECO:0007669"/>
    <property type="project" value="UniProtKB-KW"/>
</dbReference>
<dbReference type="GO" id="GO:0017154">
    <property type="term" value="F:semaphorin receptor activity"/>
    <property type="evidence" value="ECO:0007669"/>
    <property type="project" value="InterPro"/>
</dbReference>
<dbReference type="GO" id="GO:0004714">
    <property type="term" value="F:transmembrane receptor protein tyrosine kinase activity"/>
    <property type="evidence" value="ECO:0007669"/>
    <property type="project" value="UniProtKB-EC"/>
</dbReference>
<dbReference type="GO" id="GO:0007169">
    <property type="term" value="P:cell surface receptor protein tyrosine kinase signaling pathway"/>
    <property type="evidence" value="ECO:0007669"/>
    <property type="project" value="InterPro"/>
</dbReference>
<dbReference type="GO" id="GO:0050918">
    <property type="term" value="P:positive chemotaxis"/>
    <property type="evidence" value="ECO:0000250"/>
    <property type="project" value="UniProtKB"/>
</dbReference>
<dbReference type="GO" id="GO:2001028">
    <property type="term" value="P:positive regulation of endothelial cell chemotaxis"/>
    <property type="evidence" value="ECO:0000250"/>
    <property type="project" value="UniProtKB"/>
</dbReference>
<dbReference type="GO" id="GO:0071526">
    <property type="term" value="P:semaphorin-plexin signaling pathway"/>
    <property type="evidence" value="ECO:0000250"/>
    <property type="project" value="UniProtKB"/>
</dbReference>
<dbReference type="CDD" id="cd00603">
    <property type="entry name" value="IPT_PCSR"/>
    <property type="match status" value="1"/>
</dbReference>
<dbReference type="CDD" id="cd01180">
    <property type="entry name" value="IPT_plexin_repeat1"/>
    <property type="match status" value="1"/>
</dbReference>
<dbReference type="CDD" id="cd05058">
    <property type="entry name" value="PTKc_Met_Ron"/>
    <property type="match status" value="1"/>
</dbReference>
<dbReference type="FunFam" id="1.10.510.10:FF:000093">
    <property type="entry name" value="Hepatocyte growth factor receptor"/>
    <property type="match status" value="1"/>
</dbReference>
<dbReference type="FunFam" id="2.130.10.10:FF:000088">
    <property type="entry name" value="Hepatocyte growth factor receptor"/>
    <property type="match status" value="1"/>
</dbReference>
<dbReference type="FunFam" id="2.60.40.10:FF:000213">
    <property type="entry name" value="Hepatocyte growth factor receptor"/>
    <property type="match status" value="1"/>
</dbReference>
<dbReference type="FunFam" id="2.60.40.10:FF:000400">
    <property type="entry name" value="Hepatocyte growth factor receptor"/>
    <property type="match status" value="1"/>
</dbReference>
<dbReference type="FunFam" id="2.60.40.10:FF:002708">
    <property type="entry name" value="Hepatocyte growth factor receptor"/>
    <property type="match status" value="1"/>
</dbReference>
<dbReference type="FunFam" id="3.30.200.20:FF:000188">
    <property type="entry name" value="Hepatocyte growth factor receptor"/>
    <property type="match status" value="1"/>
</dbReference>
<dbReference type="FunFam" id="3.30.1680.10:FF:000006">
    <property type="entry name" value="Macrophage-stimulating 1 receptor b"/>
    <property type="match status" value="1"/>
</dbReference>
<dbReference type="Gene3D" id="2.60.40.10">
    <property type="entry name" value="Immunoglobulins"/>
    <property type="match status" value="3"/>
</dbReference>
<dbReference type="Gene3D" id="3.30.200.20">
    <property type="entry name" value="Phosphorylase Kinase, domain 1"/>
    <property type="match status" value="1"/>
</dbReference>
<dbReference type="Gene3D" id="1.10.510.10">
    <property type="entry name" value="Transferase(Phosphotransferase) domain 1"/>
    <property type="match status" value="1"/>
</dbReference>
<dbReference type="Gene3D" id="2.130.10.10">
    <property type="entry name" value="YVTN repeat-like/Quinoprotein amine dehydrogenase"/>
    <property type="match status" value="1"/>
</dbReference>
<dbReference type="InterPro" id="IPR013783">
    <property type="entry name" value="Ig-like_fold"/>
</dbReference>
<dbReference type="InterPro" id="IPR014756">
    <property type="entry name" value="Ig_E-set"/>
</dbReference>
<dbReference type="InterPro" id="IPR002909">
    <property type="entry name" value="IPT_dom"/>
</dbReference>
<dbReference type="InterPro" id="IPR011009">
    <property type="entry name" value="Kinase-like_dom_sf"/>
</dbReference>
<dbReference type="InterPro" id="IPR031148">
    <property type="entry name" value="Plexin"/>
</dbReference>
<dbReference type="InterPro" id="IPR002165">
    <property type="entry name" value="Plexin_repeat"/>
</dbReference>
<dbReference type="InterPro" id="IPR000719">
    <property type="entry name" value="Prot_kinase_dom"/>
</dbReference>
<dbReference type="InterPro" id="IPR017441">
    <property type="entry name" value="Protein_kinase_ATP_BS"/>
</dbReference>
<dbReference type="InterPro" id="IPR016201">
    <property type="entry name" value="PSI"/>
</dbReference>
<dbReference type="InterPro" id="IPR001627">
    <property type="entry name" value="Semap_dom"/>
</dbReference>
<dbReference type="InterPro" id="IPR036352">
    <property type="entry name" value="Semap_dom_sf"/>
</dbReference>
<dbReference type="InterPro" id="IPR001245">
    <property type="entry name" value="Ser-Thr/Tyr_kinase_cat_dom"/>
</dbReference>
<dbReference type="InterPro" id="IPR008266">
    <property type="entry name" value="Tyr_kinase_AS"/>
</dbReference>
<dbReference type="InterPro" id="IPR020635">
    <property type="entry name" value="Tyr_kinase_cat_dom"/>
</dbReference>
<dbReference type="InterPro" id="IPR016244">
    <property type="entry name" value="Tyr_kinase_HGF/MSP_rcpt"/>
</dbReference>
<dbReference type="InterPro" id="IPR015943">
    <property type="entry name" value="WD40/YVTN_repeat-like_dom_sf"/>
</dbReference>
<dbReference type="PANTHER" id="PTHR22625:SF61">
    <property type="entry name" value="HEPATOCYTE GROWTH FACTOR RECEPTOR"/>
    <property type="match status" value="1"/>
</dbReference>
<dbReference type="PANTHER" id="PTHR22625">
    <property type="entry name" value="PLEXIN"/>
    <property type="match status" value="1"/>
</dbReference>
<dbReference type="Pfam" id="PF07714">
    <property type="entry name" value="PK_Tyr_Ser-Thr"/>
    <property type="match status" value="1"/>
</dbReference>
<dbReference type="Pfam" id="PF01437">
    <property type="entry name" value="PSI"/>
    <property type="match status" value="1"/>
</dbReference>
<dbReference type="Pfam" id="PF01403">
    <property type="entry name" value="Sema"/>
    <property type="match status" value="1"/>
</dbReference>
<dbReference type="Pfam" id="PF01833">
    <property type="entry name" value="TIG"/>
    <property type="match status" value="3"/>
</dbReference>
<dbReference type="PIRSF" id="PIRSF000617">
    <property type="entry name" value="TyrPK_HGF-R"/>
    <property type="match status" value="1"/>
</dbReference>
<dbReference type="PRINTS" id="PR00109">
    <property type="entry name" value="TYRKINASE"/>
</dbReference>
<dbReference type="SMART" id="SM00429">
    <property type="entry name" value="IPT"/>
    <property type="match status" value="4"/>
</dbReference>
<dbReference type="SMART" id="SM00423">
    <property type="entry name" value="PSI"/>
    <property type="match status" value="1"/>
</dbReference>
<dbReference type="SMART" id="SM00630">
    <property type="entry name" value="Sema"/>
    <property type="match status" value="1"/>
</dbReference>
<dbReference type="SMART" id="SM00219">
    <property type="entry name" value="TyrKc"/>
    <property type="match status" value="1"/>
</dbReference>
<dbReference type="SUPFAM" id="SSF81296">
    <property type="entry name" value="E set domains"/>
    <property type="match status" value="3"/>
</dbReference>
<dbReference type="SUPFAM" id="SSF103575">
    <property type="entry name" value="Plexin repeat"/>
    <property type="match status" value="1"/>
</dbReference>
<dbReference type="SUPFAM" id="SSF56112">
    <property type="entry name" value="Protein kinase-like (PK-like)"/>
    <property type="match status" value="1"/>
</dbReference>
<dbReference type="SUPFAM" id="SSF101912">
    <property type="entry name" value="Sema domain"/>
    <property type="match status" value="1"/>
</dbReference>
<dbReference type="PROSITE" id="PS00107">
    <property type="entry name" value="PROTEIN_KINASE_ATP"/>
    <property type="match status" value="1"/>
</dbReference>
<dbReference type="PROSITE" id="PS50011">
    <property type="entry name" value="PROTEIN_KINASE_DOM"/>
    <property type="match status" value="1"/>
</dbReference>
<dbReference type="PROSITE" id="PS00109">
    <property type="entry name" value="PROTEIN_KINASE_TYR"/>
    <property type="match status" value="1"/>
</dbReference>
<dbReference type="PROSITE" id="PS51004">
    <property type="entry name" value="SEMA"/>
    <property type="match status" value="1"/>
</dbReference>
<feature type="signal peptide" evidence="4">
    <location>
        <begin position="1"/>
        <end position="24"/>
    </location>
</feature>
<feature type="chain" id="PRO_0000260431" description="Hepatocyte growth factor receptor">
    <location>
        <begin position="25"/>
        <end position="1381"/>
    </location>
</feature>
<feature type="topological domain" description="Extracellular" evidence="4">
    <location>
        <begin position="25"/>
        <end position="932"/>
    </location>
</feature>
<feature type="transmembrane region" description="Helical" evidence="4">
    <location>
        <begin position="933"/>
        <end position="955"/>
    </location>
</feature>
<feature type="topological domain" description="Cytoplasmic" evidence="4">
    <location>
        <begin position="956"/>
        <end position="1381"/>
    </location>
</feature>
<feature type="domain" description="Sema" evidence="6">
    <location>
        <begin position="27"/>
        <end position="515"/>
    </location>
</feature>
<feature type="domain" description="IPT/TIG 1">
    <location>
        <begin position="563"/>
        <end position="655"/>
    </location>
</feature>
<feature type="domain" description="IPT/TIG 2">
    <location>
        <begin position="657"/>
        <end position="739"/>
    </location>
</feature>
<feature type="domain" description="IPT/TIG 3">
    <location>
        <begin position="742"/>
        <end position="836"/>
    </location>
</feature>
<feature type="domain" description="Protein kinase" evidence="5">
    <location>
        <begin position="1078"/>
        <end position="1345"/>
    </location>
</feature>
<feature type="region of interest" description="Interaction with RANBP9" evidence="1">
    <location>
        <begin position="1212"/>
        <end position="1381"/>
    </location>
</feature>
<feature type="region of interest" description="Interaction with MUC20" evidence="1">
    <location>
        <begin position="1320"/>
        <end position="1359"/>
    </location>
</feature>
<feature type="active site" description="Proton acceptor" evidence="5 7">
    <location>
        <position position="1204"/>
    </location>
</feature>
<feature type="binding site" evidence="5">
    <location>
        <begin position="1084"/>
        <end position="1092"/>
    </location>
    <ligand>
        <name>ATP</name>
        <dbReference type="ChEBI" id="CHEBI:30616"/>
    </ligand>
</feature>
<feature type="binding site" evidence="5">
    <location>
        <position position="1110"/>
    </location>
    <ligand>
        <name>ATP</name>
        <dbReference type="ChEBI" id="CHEBI:30616"/>
    </ligand>
</feature>
<feature type="site" description="Cleavage" evidence="4">
    <location>
        <begin position="307"/>
        <end position="308"/>
    </location>
</feature>
<feature type="modified residue" description="Phosphoserine" evidence="2">
    <location>
        <position position="966"/>
    </location>
</feature>
<feature type="modified residue" description="Phosphothreonine" evidence="2">
    <location>
        <position position="977"/>
    </location>
</feature>
<feature type="modified residue" description="Phosphoserine" evidence="2">
    <location>
        <position position="990"/>
    </location>
</feature>
<feature type="modified residue" description="Phosphoserine" evidence="2">
    <location>
        <position position="997"/>
    </location>
</feature>
<feature type="modified residue" description="Phosphoserine" evidence="2">
    <location>
        <position position="1000"/>
    </location>
</feature>
<feature type="modified residue" description="Phosphotyrosine" evidence="2">
    <location>
        <position position="1003"/>
    </location>
</feature>
<feature type="modified residue" description="Phosphotyrosine" evidence="2">
    <location>
        <position position="1230"/>
    </location>
</feature>
<feature type="modified residue" description="Phosphotyrosine; by autocatalysis" evidence="2">
    <location>
        <position position="1234"/>
    </location>
</feature>
<feature type="modified residue" description="Phosphotyrosine; by autocatalysis" evidence="2">
    <location>
        <position position="1235"/>
    </location>
</feature>
<feature type="modified residue" description="Phosphothreonine" evidence="2">
    <location>
        <position position="1289"/>
    </location>
</feature>
<feature type="modified residue" description="Phosphotyrosine; by autocatalysis" evidence="2">
    <location>
        <position position="1349"/>
    </location>
</feature>
<feature type="modified residue" description="Phosphotyrosine; by autocatalysis" evidence="2">
    <location>
        <position position="1356"/>
    </location>
</feature>
<feature type="modified residue" description="Phosphotyrosine" evidence="2">
    <location>
        <position position="1365"/>
    </location>
</feature>
<feature type="glycosylation site" description="N-linked (GlcNAc...) asparagine" evidence="4">
    <location>
        <position position="45"/>
    </location>
</feature>
<feature type="glycosylation site" description="N-linked (GlcNAc...) asparagine" evidence="4">
    <location>
        <position position="74"/>
    </location>
</feature>
<feature type="glycosylation site" description="N-linked (GlcNAc...) asparagine" evidence="4">
    <location>
        <position position="106"/>
    </location>
</feature>
<feature type="glycosylation site" description="N-linked (GlcNAc...) asparagine" evidence="4">
    <location>
        <position position="358"/>
    </location>
</feature>
<feature type="glycosylation site" description="N-linked (GlcNAc...) asparagine" evidence="4">
    <location>
        <position position="399"/>
    </location>
</feature>
<feature type="glycosylation site" description="O-linked (Man) threonine" evidence="2">
    <location>
        <position position="582"/>
    </location>
</feature>
<feature type="glycosylation site" description="N-linked (GlcNAc...) asparagine" evidence="4">
    <location>
        <position position="607"/>
    </location>
</feature>
<feature type="glycosylation site" description="N-linked (GlcNAc...) asparagine" evidence="4">
    <location>
        <position position="635"/>
    </location>
</feature>
<feature type="glycosylation site" description="O-linked (Man) threonine" evidence="2">
    <location>
        <position position="676"/>
    </location>
</feature>
<feature type="glycosylation site" description="O-linked (Man) threonine" evidence="2">
    <location>
        <position position="761"/>
    </location>
</feature>
<feature type="glycosylation site" description="N-linked (GlcNAc...) asparagine" evidence="4">
    <location>
        <position position="785"/>
    </location>
</feature>
<feature type="glycosylation site" description="N-linked (GlcNAc...) asparagine" evidence="4">
    <location>
        <position position="879"/>
    </location>
</feature>
<feature type="glycosylation site" description="N-linked (GlcNAc...) asparagine" evidence="4">
    <location>
        <position position="930"/>
    </location>
</feature>
<feature type="disulfide bond" evidence="6">
    <location>
        <begin position="95"/>
        <end position="101"/>
    </location>
</feature>
<feature type="disulfide bond" evidence="6">
    <location>
        <begin position="98"/>
        <end position="159"/>
    </location>
</feature>
<feature type="disulfide bond" evidence="6">
    <location>
        <begin position="133"/>
        <end position="141"/>
    </location>
</feature>
<feature type="disulfide bond" evidence="6">
    <location>
        <begin position="172"/>
        <end position="175"/>
    </location>
</feature>
<feature type="disulfide bond" evidence="6">
    <location>
        <begin position="298"/>
        <end position="363"/>
    </location>
</feature>
<feature type="disulfide bond" evidence="6">
    <location>
        <begin position="385"/>
        <end position="397"/>
    </location>
</feature>
<feature type="disulfide bond" evidence="6">
    <location>
        <begin position="520"/>
        <end position="538"/>
    </location>
</feature>
<feature type="disulfide bond" evidence="6">
    <location>
        <begin position="526"/>
        <end position="561"/>
    </location>
</feature>
<feature type="disulfide bond" evidence="6">
    <location>
        <begin position="529"/>
        <end position="545"/>
    </location>
</feature>
<feature type="disulfide bond" evidence="6">
    <location>
        <begin position="541"/>
        <end position="551"/>
    </location>
</feature>
<organism>
    <name type="scientific">Rhinolophus ferrumequinum</name>
    <name type="common">Greater horseshoe bat</name>
    <dbReference type="NCBI Taxonomy" id="59479"/>
    <lineage>
        <taxon>Eukaryota</taxon>
        <taxon>Metazoa</taxon>
        <taxon>Chordata</taxon>
        <taxon>Craniata</taxon>
        <taxon>Vertebrata</taxon>
        <taxon>Euteleostomi</taxon>
        <taxon>Mammalia</taxon>
        <taxon>Eutheria</taxon>
        <taxon>Laurasiatheria</taxon>
        <taxon>Chiroptera</taxon>
        <taxon>Yinpterochiroptera</taxon>
        <taxon>Rhinolophoidea</taxon>
        <taxon>Rhinolophidae</taxon>
        <taxon>Rhinolophinae</taxon>
        <taxon>Rhinolophus</taxon>
    </lineage>
</organism>
<keyword id="KW-0067">ATP-binding</keyword>
<keyword id="KW-1015">Disulfide bond</keyword>
<keyword id="KW-0325">Glycoprotein</keyword>
<keyword id="KW-0418">Kinase</keyword>
<keyword id="KW-0472">Membrane</keyword>
<keyword id="KW-0547">Nucleotide-binding</keyword>
<keyword id="KW-0597">Phosphoprotein</keyword>
<keyword id="KW-0656">Proto-oncogene</keyword>
<keyword id="KW-0675">Receptor</keyword>
<keyword id="KW-1185">Reference proteome</keyword>
<keyword id="KW-0677">Repeat</keyword>
<keyword id="KW-0732">Signal</keyword>
<keyword id="KW-0808">Transferase</keyword>
<keyword id="KW-0812">Transmembrane</keyword>
<keyword id="KW-1133">Transmembrane helix</keyword>
<keyword id="KW-0829">Tyrosine-protein kinase</keyword>
<keyword id="KW-0832">Ubl conjugation</keyword>
<protein>
    <recommendedName>
        <fullName>Hepatocyte growth factor receptor</fullName>
        <shortName>HGF receptor</shortName>
        <ecNumber>2.7.10.1</ecNumber>
    </recommendedName>
    <alternativeName>
        <fullName>HGF/SF receptor</fullName>
    </alternativeName>
    <alternativeName>
        <fullName>Proto-oncogene c-Met</fullName>
    </alternativeName>
    <alternativeName>
        <fullName>Scatter factor receptor</fullName>
        <shortName>SF receptor</shortName>
    </alternativeName>
    <alternativeName>
        <fullName>Tyrosine-protein kinase Met</fullName>
    </alternativeName>
</protein>
<gene>
    <name type="primary">MET</name>
</gene>
<evidence type="ECO:0000250" key="1"/>
<evidence type="ECO:0000250" key="2">
    <source>
        <dbReference type="UniProtKB" id="P08581"/>
    </source>
</evidence>
<evidence type="ECO:0000250" key="3">
    <source>
        <dbReference type="UniProtKB" id="P16056"/>
    </source>
</evidence>
<evidence type="ECO:0000255" key="4"/>
<evidence type="ECO:0000255" key="5">
    <source>
        <dbReference type="PROSITE-ProRule" id="PRU00159"/>
    </source>
</evidence>
<evidence type="ECO:0000255" key="6">
    <source>
        <dbReference type="PROSITE-ProRule" id="PRU00352"/>
    </source>
</evidence>
<evidence type="ECO:0000255" key="7">
    <source>
        <dbReference type="PROSITE-ProRule" id="PRU10028"/>
    </source>
</evidence>
<reference key="1">
    <citation type="submission" date="2006-01" db="EMBL/GenBank/DDBJ databases">
        <title>NISC comparative sequencing initiative.</title>
        <authorList>
            <person name="Antonellis A."/>
            <person name="Ayele K."/>
            <person name="Benjamin B."/>
            <person name="Blakesley R.W."/>
            <person name="Boakye A."/>
            <person name="Bouffard G.G."/>
            <person name="Brinkley C."/>
            <person name="Brooks S."/>
            <person name="Chu G."/>
            <person name="Coleman H."/>
            <person name="Engle J."/>
            <person name="Gestole M."/>
            <person name="Greene A."/>
            <person name="Guan X."/>
            <person name="Gupta J."/>
            <person name="Haghighi P."/>
            <person name="Han J."/>
            <person name="Hansen N."/>
            <person name="Ho S.-L."/>
            <person name="Hu P."/>
            <person name="Hunter G."/>
            <person name="Hurle B."/>
            <person name="Idol J.R."/>
            <person name="Kwong P."/>
            <person name="Laric P."/>
            <person name="Larson S."/>
            <person name="Lee-Lin S.-Q."/>
            <person name="Legaspi R."/>
            <person name="Madden M."/>
            <person name="Maduro Q.L."/>
            <person name="Maduro V.B."/>
            <person name="Margulies E.H."/>
            <person name="Masiello C."/>
            <person name="Maskeri B."/>
            <person name="McDowell J."/>
            <person name="Mojidi H.A."/>
            <person name="Mullikin J.C."/>
            <person name="Oestreicher J.S."/>
            <person name="Park M."/>
            <person name="Portnoy M.E."/>
            <person name="Prasad A."/>
            <person name="Puri O."/>
            <person name="Reddix-Dugue N."/>
            <person name="Schandler K."/>
            <person name="Schueler M.G."/>
            <person name="Sison C."/>
            <person name="Stantripop S."/>
            <person name="Stephen E."/>
            <person name="Taye A."/>
            <person name="Thomas J.W."/>
            <person name="Thomas P.J."/>
            <person name="Tsipouri V."/>
            <person name="Ung L."/>
            <person name="Vogt J.L."/>
            <person name="Wetherby K.D."/>
            <person name="Young A."/>
            <person name="Green E.D."/>
        </authorList>
    </citation>
    <scope>NUCLEOTIDE SEQUENCE [LARGE SCALE GENOMIC DNA]</scope>
</reference>
<accession>Q2IBC0</accession>
<proteinExistence type="inferred from homology"/>
<name>MET_RHIFE</name>
<comment type="function">
    <text evidence="1">Receptor tyrosine kinase that transduces signals from the extracellular matrix into the cytoplasm by binding to hepatocyte growth factor/HGF ligand. Regulates many physiological processes including proliferation, scattering, morphogenesis and survival. Ligand binding at the cell surface induces autophosphorylation of MET on its intracellular domain that provides docking sites for downstream signaling molecules. Following activation by ligand, interacts with the PI3-kinase subunit PIK3R1, PLCG1, SRC, GRB2, STAT3 or the adapter GAB1. Recruitment of these downstream effectors by MET leads to the activation of several signaling cascades including the RAS-ERK, PI3 kinase-AKT, or PLCgamma-PKC. The RAS-ERK activation is associated with the morphogenetic effects while PI3K/AKT coordinates prosurvival effects. During embryonic development, MET signaling plays a role in gastrulation, development and migration of muscles and neuronal precursors, angiogenesis and kidney formation. In adults, participates in wound healing as well as organ regeneration and tissue remodeling. Also promotes differentiation and proliferation of hematopoietic cells (By similarity).</text>
</comment>
<comment type="catalytic activity">
    <reaction evidence="7">
        <text>L-tyrosyl-[protein] + ATP = O-phospho-L-tyrosyl-[protein] + ADP + H(+)</text>
        <dbReference type="Rhea" id="RHEA:10596"/>
        <dbReference type="Rhea" id="RHEA-COMP:10136"/>
        <dbReference type="Rhea" id="RHEA-COMP:20101"/>
        <dbReference type="ChEBI" id="CHEBI:15378"/>
        <dbReference type="ChEBI" id="CHEBI:30616"/>
        <dbReference type="ChEBI" id="CHEBI:46858"/>
        <dbReference type="ChEBI" id="CHEBI:61978"/>
        <dbReference type="ChEBI" id="CHEBI:456216"/>
        <dbReference type="EC" id="2.7.10.1"/>
    </reaction>
</comment>
<comment type="activity regulation">
    <text evidence="1">In its inactive state, the C-terminal tail interacts with the catalytic domain and inhibits the kinase activity. Upon ligand binding, the C-terminal tail is displaced and becomes phosphorylated, thus increasing the kinase activity (By similarity).</text>
</comment>
<comment type="subunit">
    <text evidence="2 3">Heterodimer made of an alpha chain (50 kDa) and a beta chain (145 kDa) which are disulfide linked. Binds PLXNB1. Interacts when phosphorylated with downstream effectors including STAT3, PIK3R1, SRC, PCLG1, GRB2 and GAB1. Interacts with SPSB1, SPSB2 and SPSB4. Interacts with INPP5D/SHIP1. When phosphorylated at Tyr-1356, interacts with INPPL1/SHIP2. Interacts with RANBP9 and RANBP10, as well as SPSB1, SPSB2, SPSB3 and SPSB4. SPSB1 binding occurs in the presence and in the absence of HGF, however HGF treatment has a positive effect on this interaction. Interacts with MUC20; prevents interaction with GRB2 and suppresses hepatocyte growth factor-induced cell proliferation. Interacts with GRB10. Interacts with PTPN1 and PTPN2. Interacts with HSP90AA1 and HSP90AB1; the interaction suppresses MET kinase activity. Interacts with tensin TNS3 (By similarity). Interacts (when phosphorylated) with tensin TNS4 (via SH2 domain); the interaction increases MET protein stability by inhibiting MET endocytosis and subsequent lysosomal degradation (By similarity).</text>
</comment>
<comment type="subcellular location">
    <subcellularLocation>
        <location evidence="1">Membrane</location>
        <topology evidence="1">Single-pass type I membrane protein</topology>
    </subcellularLocation>
</comment>
<comment type="domain">
    <text evidence="1">The kinase domain is involved in SPSB1 binding.</text>
</comment>
<comment type="domain">
    <text evidence="1">The beta-propeller Sema domain mediates binding to HGF.</text>
</comment>
<comment type="PTM">
    <text evidence="2">Autophosphorylated in response to ligand binding on Tyr-1234 and Tyr-1235 in the kinase domain leading to further phosphorylation of Tyr-1349 and Tyr-1356 in the C-terminal multifunctional docking site. Dephosphorylated by PTPRJ at Tyr-1349 and Tyr-1365. Dephosphorylated by PTPN1 and PTPN2 (By similarity).</text>
</comment>
<comment type="PTM">
    <text evidence="2">Ubiquitinated. Ubiquitination by CBL regulates the receptor stability and activity through proteasomal degradation (By similarity).</text>
</comment>
<comment type="PTM">
    <text evidence="2">O-mannosylation of IPT/TIG domains by TMEM260 is required for protein maturation. O-mannosylated residues are composed of single mannose glycans that are not elongated or modified.</text>
</comment>
<comment type="similarity">
    <text evidence="5">Belongs to the protein kinase superfamily. Tyr protein kinase family.</text>
</comment>